<dbReference type="EMBL" id="X15279">
    <property type="protein sequence ID" value="CAA33352.1"/>
    <property type="molecule type" value="Genomic_DNA"/>
</dbReference>
<dbReference type="PIR" id="JN0036">
    <property type="entry name" value="JN0036"/>
</dbReference>
<dbReference type="RefSeq" id="NP_862915.1">
    <property type="nucleotide sequence ID" value="NC_004998.1"/>
</dbReference>
<dbReference type="RefSeq" id="WP_001418721.1">
    <property type="nucleotide sequence ID" value="NZ_CP142038.1"/>
</dbReference>
<dbReference type="RefSeq" id="YP_009060160.1">
    <property type="nucleotide sequence ID" value="NC_024956.1"/>
</dbReference>
<dbReference type="SMR" id="P17738"/>
<dbReference type="CAZy" id="GH23">
    <property type="family name" value="Glycoside Hydrolase Family 23"/>
</dbReference>
<dbReference type="CDD" id="cd13400">
    <property type="entry name" value="LT_IagB-like"/>
    <property type="match status" value="1"/>
</dbReference>
<dbReference type="Gene3D" id="1.10.530.10">
    <property type="match status" value="1"/>
</dbReference>
<dbReference type="InterPro" id="IPR023346">
    <property type="entry name" value="Lysozyme-like_dom_sf"/>
</dbReference>
<dbReference type="InterPro" id="IPR008258">
    <property type="entry name" value="Transglycosylase_SLT_dom_1"/>
</dbReference>
<dbReference type="Pfam" id="PF01464">
    <property type="entry name" value="SLT"/>
    <property type="match status" value="1"/>
</dbReference>
<dbReference type="SUPFAM" id="SSF53955">
    <property type="entry name" value="Lysozyme-like"/>
    <property type="match status" value="1"/>
</dbReference>
<geneLocation type="plasmid">
    <name>IncFII R1</name>
</geneLocation>
<gene>
    <name type="primary">X</name>
    <name type="synonym">19</name>
</gene>
<evidence type="ECO:0000305" key="1"/>
<accession>P17738</accession>
<protein>
    <recommendedName>
        <fullName>X polypeptide</fullName>
    </recommendedName>
    <alternativeName>
        <fullName>ORF 19</fullName>
    </alternativeName>
    <alternativeName>
        <fullName>ORF169</fullName>
    </alternativeName>
    <alternativeName>
        <fullName>P19 protein</fullName>
    </alternativeName>
</protein>
<organism>
    <name type="scientific">Escherichia coli</name>
    <dbReference type="NCBI Taxonomy" id="562"/>
    <lineage>
        <taxon>Bacteria</taxon>
        <taxon>Pseudomonadati</taxon>
        <taxon>Pseudomonadota</taxon>
        <taxon>Gammaproteobacteria</taxon>
        <taxon>Enterobacterales</taxon>
        <taxon>Enterobacteriaceae</taxon>
        <taxon>Escherichia</taxon>
    </lineage>
</organism>
<keyword id="KW-0614">Plasmid</keyword>
<comment type="similarity">
    <text evidence="1">Belongs to the IagB/IpgF/P19 family.</text>
</comment>
<reference key="1">
    <citation type="journal article" date="1990" name="Nucleic Acids Res.">
        <title>The sequence of the leading region of the resistance plasmid R1.</title>
        <authorList>
            <person name="Graus H."/>
            <person name="Hoedel A."/>
            <person name="Wallner P."/>
            <person name="Hoegenauer G."/>
        </authorList>
    </citation>
    <scope>NUCLEOTIDE SEQUENCE [GENOMIC DNA]</scope>
</reference>
<sequence length="169" mass="19290">MKKWMLAICLMFINEICQATDCFDLAGRDYKIDPDLLRAISWKESRYRVNAIGINPVTGYGSGLMQVDSQHFNELARYGIKPEHLTTDPCMNIYTGAYYLAIAFKKWGVTWEAVGAYNAGFRKSERQNQRRLAYASEVYRIYTGIKSSKGIRLPATKKSLPEINSVQNN</sequence>
<name>X192_ECOLX</name>
<feature type="chain" id="PRO_0000068497" description="X polypeptide">
    <location>
        <begin position="1"/>
        <end position="169"/>
    </location>
</feature>
<proteinExistence type="inferred from homology"/>